<sequence length="138" mass="15697">MANPELLEEQREETRLIIEELLEDGSDPDALYTIEHHLSADDFETLEKAAVEAFKLGYEVTEPEELEVEEGDTVICCDILSECALNAELIDAQVEQLMNLAEKYDVEYDGWGTYFEDPNGEEGDDDDYVDEDDDGVRH</sequence>
<feature type="chain" id="PRO_0000169761" description="Regulator of ribonuclease activity B">
    <location>
        <begin position="1"/>
        <end position="138"/>
    </location>
</feature>
<feature type="region of interest" description="Disordered" evidence="2">
    <location>
        <begin position="111"/>
        <end position="138"/>
    </location>
</feature>
<feature type="compositionally biased region" description="Acidic residues" evidence="2">
    <location>
        <begin position="118"/>
        <end position="138"/>
    </location>
</feature>
<evidence type="ECO:0000255" key="1">
    <source>
        <dbReference type="HAMAP-Rule" id="MF_01888"/>
    </source>
</evidence>
<evidence type="ECO:0000256" key="2">
    <source>
        <dbReference type="SAM" id="MobiDB-lite"/>
    </source>
</evidence>
<gene>
    <name evidence="1" type="primary">rraB</name>
    <name type="ordered locus">STY4808</name>
    <name type="ordered locus">t4504</name>
</gene>
<comment type="function">
    <text evidence="1">Globally modulates RNA abundance by binding to RNase E (Rne) and regulating its endonucleolytic activity. Can modulate Rne action in a substrate-dependent manner by altering the composition of the degradosome.</text>
</comment>
<comment type="subunit">
    <text evidence="1">Interacts with the C-terminal region of Rne.</text>
</comment>
<comment type="subcellular location">
    <subcellularLocation>
        <location evidence="1">Cytoplasm</location>
    </subcellularLocation>
</comment>
<comment type="similarity">
    <text evidence="1">Belongs to the RraB family.</text>
</comment>
<keyword id="KW-0963">Cytoplasm</keyword>
<organism>
    <name type="scientific">Salmonella typhi</name>
    <dbReference type="NCBI Taxonomy" id="90370"/>
    <lineage>
        <taxon>Bacteria</taxon>
        <taxon>Pseudomonadati</taxon>
        <taxon>Pseudomonadota</taxon>
        <taxon>Gammaproteobacteria</taxon>
        <taxon>Enterobacterales</taxon>
        <taxon>Enterobacteriaceae</taxon>
        <taxon>Salmonella</taxon>
    </lineage>
</organism>
<dbReference type="EMBL" id="AL513382">
    <property type="protein sequence ID" value="CAD06930.1"/>
    <property type="molecule type" value="Genomic_DNA"/>
</dbReference>
<dbReference type="EMBL" id="AE014613">
    <property type="protein sequence ID" value="AAO71951.1"/>
    <property type="molecule type" value="Genomic_DNA"/>
</dbReference>
<dbReference type="RefSeq" id="NP_458887.1">
    <property type="nucleotide sequence ID" value="NC_003198.1"/>
</dbReference>
<dbReference type="RefSeq" id="WP_000002940.1">
    <property type="nucleotide sequence ID" value="NZ_WSUR01000016.1"/>
</dbReference>
<dbReference type="SMR" id="P0A1U7"/>
<dbReference type="STRING" id="220341.gene:17588630"/>
<dbReference type="KEGG" id="stt:t4504"/>
<dbReference type="KEGG" id="sty:STY4808"/>
<dbReference type="PATRIC" id="fig|220341.7.peg.4917"/>
<dbReference type="eggNOG" id="COG3076">
    <property type="taxonomic scope" value="Bacteria"/>
</dbReference>
<dbReference type="HOGENOM" id="CLU_128640_0_0_6"/>
<dbReference type="OMA" id="IEHHFAS"/>
<dbReference type="OrthoDB" id="7065464at2"/>
<dbReference type="Proteomes" id="UP000000541">
    <property type="component" value="Chromosome"/>
</dbReference>
<dbReference type="Proteomes" id="UP000002670">
    <property type="component" value="Chromosome"/>
</dbReference>
<dbReference type="GO" id="GO:0005737">
    <property type="term" value="C:cytoplasm"/>
    <property type="evidence" value="ECO:0007669"/>
    <property type="project" value="UniProtKB-SubCell"/>
</dbReference>
<dbReference type="GO" id="GO:0060698">
    <property type="term" value="F:endoribonuclease inhibitor activity"/>
    <property type="evidence" value="ECO:0007669"/>
    <property type="project" value="UniProtKB-UniRule"/>
</dbReference>
<dbReference type="GO" id="GO:0019899">
    <property type="term" value="F:enzyme binding"/>
    <property type="evidence" value="ECO:0007669"/>
    <property type="project" value="UniProtKB-UniRule"/>
</dbReference>
<dbReference type="FunFam" id="3.30.70.970:FF:000001">
    <property type="entry name" value="Regulator of ribonuclease activity B"/>
    <property type="match status" value="1"/>
</dbReference>
<dbReference type="Gene3D" id="3.30.70.970">
    <property type="entry name" value="RraB-like"/>
    <property type="match status" value="1"/>
</dbReference>
<dbReference type="HAMAP" id="MF_01888">
    <property type="entry name" value="RraB"/>
    <property type="match status" value="1"/>
</dbReference>
<dbReference type="InterPro" id="IPR016716">
    <property type="entry name" value="RraB"/>
</dbReference>
<dbReference type="InterPro" id="IPR036701">
    <property type="entry name" value="RraB-like_sf"/>
</dbReference>
<dbReference type="InterPro" id="IPR009671">
    <property type="entry name" value="RraB_dom"/>
</dbReference>
<dbReference type="NCBIfam" id="NF008393">
    <property type="entry name" value="PRK11191.1"/>
    <property type="match status" value="1"/>
</dbReference>
<dbReference type="Pfam" id="PF06877">
    <property type="entry name" value="RraB"/>
    <property type="match status" value="1"/>
</dbReference>
<dbReference type="PIRSF" id="PIRSF018193">
    <property type="entry name" value="UCP018193"/>
    <property type="match status" value="1"/>
</dbReference>
<dbReference type="SUPFAM" id="SSF89946">
    <property type="entry name" value="Hypothetical protein VC0424"/>
    <property type="match status" value="1"/>
</dbReference>
<name>RRAB_SALTI</name>
<proteinExistence type="inferred from homology"/>
<accession>P0A1U7</accession>
<accession>Q08019</accession>
<protein>
    <recommendedName>
        <fullName evidence="1">Regulator of ribonuclease activity B</fullName>
    </recommendedName>
</protein>
<reference key="1">
    <citation type="journal article" date="2001" name="Nature">
        <title>Complete genome sequence of a multiple drug resistant Salmonella enterica serovar Typhi CT18.</title>
        <authorList>
            <person name="Parkhill J."/>
            <person name="Dougan G."/>
            <person name="James K.D."/>
            <person name="Thomson N.R."/>
            <person name="Pickard D."/>
            <person name="Wain J."/>
            <person name="Churcher C.M."/>
            <person name="Mungall K.L."/>
            <person name="Bentley S.D."/>
            <person name="Holden M.T.G."/>
            <person name="Sebaihia M."/>
            <person name="Baker S."/>
            <person name="Basham D."/>
            <person name="Brooks K."/>
            <person name="Chillingworth T."/>
            <person name="Connerton P."/>
            <person name="Cronin A."/>
            <person name="Davis P."/>
            <person name="Davies R.M."/>
            <person name="Dowd L."/>
            <person name="White N."/>
            <person name="Farrar J."/>
            <person name="Feltwell T."/>
            <person name="Hamlin N."/>
            <person name="Haque A."/>
            <person name="Hien T.T."/>
            <person name="Holroyd S."/>
            <person name="Jagels K."/>
            <person name="Krogh A."/>
            <person name="Larsen T.S."/>
            <person name="Leather S."/>
            <person name="Moule S."/>
            <person name="O'Gaora P."/>
            <person name="Parry C."/>
            <person name="Quail M.A."/>
            <person name="Rutherford K.M."/>
            <person name="Simmonds M."/>
            <person name="Skelton J."/>
            <person name="Stevens K."/>
            <person name="Whitehead S."/>
            <person name="Barrell B.G."/>
        </authorList>
    </citation>
    <scope>NUCLEOTIDE SEQUENCE [LARGE SCALE GENOMIC DNA]</scope>
    <source>
        <strain>CT18</strain>
    </source>
</reference>
<reference key="2">
    <citation type="journal article" date="2003" name="J. Bacteriol.">
        <title>Comparative genomics of Salmonella enterica serovar Typhi strains Ty2 and CT18.</title>
        <authorList>
            <person name="Deng W."/>
            <person name="Liou S.-R."/>
            <person name="Plunkett G. III"/>
            <person name="Mayhew G.F."/>
            <person name="Rose D.J."/>
            <person name="Burland V."/>
            <person name="Kodoyianni V."/>
            <person name="Schwartz D.C."/>
            <person name="Blattner F.R."/>
        </authorList>
    </citation>
    <scope>NUCLEOTIDE SEQUENCE [LARGE SCALE GENOMIC DNA]</scope>
    <source>
        <strain>ATCC 700931 / Ty2</strain>
    </source>
</reference>